<feature type="chain" id="PRO_1000055213" description="Large ribosomal subunit protein uL6">
    <location>
        <begin position="1"/>
        <end position="178"/>
    </location>
</feature>
<keyword id="KW-0687">Ribonucleoprotein</keyword>
<keyword id="KW-0689">Ribosomal protein</keyword>
<keyword id="KW-0694">RNA-binding</keyword>
<keyword id="KW-0699">rRNA-binding</keyword>
<organism>
    <name type="scientific">Campylobacter fetus subsp. fetus (strain 82-40)</name>
    <dbReference type="NCBI Taxonomy" id="360106"/>
    <lineage>
        <taxon>Bacteria</taxon>
        <taxon>Pseudomonadati</taxon>
        <taxon>Campylobacterota</taxon>
        <taxon>Epsilonproteobacteria</taxon>
        <taxon>Campylobacterales</taxon>
        <taxon>Campylobacteraceae</taxon>
        <taxon>Campylobacter</taxon>
    </lineage>
</organism>
<gene>
    <name evidence="1" type="primary">rplF</name>
    <name type="ordered locus">CFF8240_0049</name>
</gene>
<name>RL6_CAMFF</name>
<proteinExistence type="inferred from homology"/>
<reference key="1">
    <citation type="submission" date="2006-11" db="EMBL/GenBank/DDBJ databases">
        <title>Sequence of Campylobacter fetus subsp. fetus 82-40.</title>
        <authorList>
            <person name="Fouts D.E."/>
            <person name="Nelson K.E."/>
        </authorList>
    </citation>
    <scope>NUCLEOTIDE SEQUENCE [LARGE SCALE GENOMIC DNA]</scope>
    <source>
        <strain>82-40</strain>
    </source>
</reference>
<protein>
    <recommendedName>
        <fullName evidence="1">Large ribosomal subunit protein uL6</fullName>
    </recommendedName>
    <alternativeName>
        <fullName evidence="2">50S ribosomal protein L6</fullName>
    </alternativeName>
</protein>
<sequence length="178" mass="19361">MSRIGKQPISIPNGLDVSLKGSVLVFKKGNNTKELDTKGNVNIEVKDGNIIFTSKGDDRQSRAYWGTYRALANNVVVGLTTGFTKQLEINGVGYKAAAKGKVLELALGFSHPINYELPEGIEISVEKNIITIKGSDKQVVGQVAAEVRGFRPPEPYKGKGVKYAEERIIRKAGKTSKK</sequence>
<accession>A0RM26</accession>
<evidence type="ECO:0000255" key="1">
    <source>
        <dbReference type="HAMAP-Rule" id="MF_01365"/>
    </source>
</evidence>
<evidence type="ECO:0000305" key="2"/>
<dbReference type="EMBL" id="CP000487">
    <property type="protein sequence ID" value="ABK82725.1"/>
    <property type="molecule type" value="Genomic_DNA"/>
</dbReference>
<dbReference type="RefSeq" id="WP_011731684.1">
    <property type="nucleotide sequence ID" value="NC_008599.1"/>
</dbReference>
<dbReference type="SMR" id="A0RM26"/>
<dbReference type="GeneID" id="61063892"/>
<dbReference type="KEGG" id="cff:CFF8240_0049"/>
<dbReference type="PATRIC" id="fig|360106.6.peg.50"/>
<dbReference type="eggNOG" id="COG0097">
    <property type="taxonomic scope" value="Bacteria"/>
</dbReference>
<dbReference type="HOGENOM" id="CLU_065464_1_2_7"/>
<dbReference type="Proteomes" id="UP000000760">
    <property type="component" value="Chromosome"/>
</dbReference>
<dbReference type="GO" id="GO:0022625">
    <property type="term" value="C:cytosolic large ribosomal subunit"/>
    <property type="evidence" value="ECO:0007669"/>
    <property type="project" value="TreeGrafter"/>
</dbReference>
<dbReference type="GO" id="GO:0019843">
    <property type="term" value="F:rRNA binding"/>
    <property type="evidence" value="ECO:0007669"/>
    <property type="project" value="UniProtKB-UniRule"/>
</dbReference>
<dbReference type="GO" id="GO:0003735">
    <property type="term" value="F:structural constituent of ribosome"/>
    <property type="evidence" value="ECO:0007669"/>
    <property type="project" value="InterPro"/>
</dbReference>
<dbReference type="GO" id="GO:0002181">
    <property type="term" value="P:cytoplasmic translation"/>
    <property type="evidence" value="ECO:0007669"/>
    <property type="project" value="TreeGrafter"/>
</dbReference>
<dbReference type="FunFam" id="3.90.930.12:FF:000001">
    <property type="entry name" value="50S ribosomal protein L6"/>
    <property type="match status" value="1"/>
</dbReference>
<dbReference type="Gene3D" id="3.90.930.12">
    <property type="entry name" value="Ribosomal protein L6, alpha-beta domain"/>
    <property type="match status" value="2"/>
</dbReference>
<dbReference type="HAMAP" id="MF_01365_B">
    <property type="entry name" value="Ribosomal_uL6_B"/>
    <property type="match status" value="1"/>
</dbReference>
<dbReference type="InterPro" id="IPR000702">
    <property type="entry name" value="Ribosomal_uL6-like"/>
</dbReference>
<dbReference type="InterPro" id="IPR036789">
    <property type="entry name" value="Ribosomal_uL6-like_a/b-dom_sf"/>
</dbReference>
<dbReference type="InterPro" id="IPR020040">
    <property type="entry name" value="Ribosomal_uL6_a/b-dom"/>
</dbReference>
<dbReference type="InterPro" id="IPR019906">
    <property type="entry name" value="Ribosomal_uL6_bac-type"/>
</dbReference>
<dbReference type="InterPro" id="IPR002358">
    <property type="entry name" value="Ribosomal_uL6_CS"/>
</dbReference>
<dbReference type="NCBIfam" id="TIGR03654">
    <property type="entry name" value="L6_bact"/>
    <property type="match status" value="1"/>
</dbReference>
<dbReference type="PANTHER" id="PTHR11655">
    <property type="entry name" value="60S/50S RIBOSOMAL PROTEIN L6/L9"/>
    <property type="match status" value="1"/>
</dbReference>
<dbReference type="PANTHER" id="PTHR11655:SF14">
    <property type="entry name" value="LARGE RIBOSOMAL SUBUNIT PROTEIN UL6M"/>
    <property type="match status" value="1"/>
</dbReference>
<dbReference type="Pfam" id="PF00347">
    <property type="entry name" value="Ribosomal_L6"/>
    <property type="match status" value="2"/>
</dbReference>
<dbReference type="PIRSF" id="PIRSF002162">
    <property type="entry name" value="Ribosomal_L6"/>
    <property type="match status" value="1"/>
</dbReference>
<dbReference type="PRINTS" id="PR00059">
    <property type="entry name" value="RIBOSOMALL6"/>
</dbReference>
<dbReference type="SUPFAM" id="SSF56053">
    <property type="entry name" value="Ribosomal protein L6"/>
    <property type="match status" value="2"/>
</dbReference>
<dbReference type="PROSITE" id="PS00525">
    <property type="entry name" value="RIBOSOMAL_L6_1"/>
    <property type="match status" value="1"/>
</dbReference>
<comment type="function">
    <text evidence="1">This protein binds to the 23S rRNA, and is important in its secondary structure. It is located near the subunit interface in the base of the L7/L12 stalk, and near the tRNA binding site of the peptidyltransferase center.</text>
</comment>
<comment type="subunit">
    <text evidence="1">Part of the 50S ribosomal subunit.</text>
</comment>
<comment type="similarity">
    <text evidence="1">Belongs to the universal ribosomal protein uL6 family.</text>
</comment>